<gene>
    <name type="ordered locus">TP_0766</name>
</gene>
<organism>
    <name type="scientific">Treponema pallidum (strain Nichols)</name>
    <dbReference type="NCBI Taxonomy" id="243276"/>
    <lineage>
        <taxon>Bacteria</taxon>
        <taxon>Pseudomonadati</taxon>
        <taxon>Spirochaetota</taxon>
        <taxon>Spirochaetia</taxon>
        <taxon>Spirochaetales</taxon>
        <taxon>Treponemataceae</taxon>
        <taxon>Treponema</taxon>
    </lineage>
</organism>
<feature type="chain" id="PRO_0000202319" description="Uncharacterized protein TP_0766">
    <location>
        <begin position="1"/>
        <end position="293"/>
    </location>
</feature>
<name>Y766_TREPA</name>
<protein>
    <recommendedName>
        <fullName>Uncharacterized protein TP_0766</fullName>
    </recommendedName>
</protein>
<accession>O83747</accession>
<keyword id="KW-1185">Reference proteome</keyword>
<reference key="1">
    <citation type="journal article" date="1998" name="Science">
        <title>Complete genome sequence of Treponema pallidum, the syphilis spirochete.</title>
        <authorList>
            <person name="Fraser C.M."/>
            <person name="Norris S.J."/>
            <person name="Weinstock G.M."/>
            <person name="White O."/>
            <person name="Sutton G.G."/>
            <person name="Dodson R.J."/>
            <person name="Gwinn M.L."/>
            <person name="Hickey E.K."/>
            <person name="Clayton R.A."/>
            <person name="Ketchum K.A."/>
            <person name="Sodergren E."/>
            <person name="Hardham J.M."/>
            <person name="McLeod M.P."/>
            <person name="Salzberg S.L."/>
            <person name="Peterson J.D."/>
            <person name="Khalak H.G."/>
            <person name="Richardson D.L."/>
            <person name="Howell J.K."/>
            <person name="Chidambaram M."/>
            <person name="Utterback T.R."/>
            <person name="McDonald L.A."/>
            <person name="Artiach P."/>
            <person name="Bowman C."/>
            <person name="Cotton M.D."/>
            <person name="Fujii C."/>
            <person name="Garland S.A."/>
            <person name="Hatch B."/>
            <person name="Horst K."/>
            <person name="Roberts K.M."/>
            <person name="Sandusky M."/>
            <person name="Weidman J.F."/>
            <person name="Smith H.O."/>
            <person name="Venter J.C."/>
        </authorList>
    </citation>
    <scope>NUCLEOTIDE SEQUENCE [LARGE SCALE GENOMIC DNA]</scope>
    <source>
        <strain>Nichols</strain>
    </source>
</reference>
<dbReference type="EMBL" id="AE000520">
    <property type="protein sequence ID" value="AAC65741.1"/>
    <property type="molecule type" value="Genomic_DNA"/>
</dbReference>
<dbReference type="PIR" id="C71283">
    <property type="entry name" value="C71283"/>
</dbReference>
<dbReference type="RefSeq" id="WP_010882211.1">
    <property type="nucleotide sequence ID" value="NC_021490.2"/>
</dbReference>
<dbReference type="IntAct" id="O83747">
    <property type="interactions" value="2"/>
</dbReference>
<dbReference type="EnsemblBacteria" id="AAC65741">
    <property type="protein sequence ID" value="AAC65741"/>
    <property type="gene ID" value="TP_0766"/>
</dbReference>
<dbReference type="KEGG" id="tpa:TP_0766"/>
<dbReference type="KEGG" id="tpw:TPANIC_0766"/>
<dbReference type="eggNOG" id="ENOG5031CPS">
    <property type="taxonomic scope" value="Bacteria"/>
</dbReference>
<dbReference type="HOGENOM" id="CLU_949773_0_0_12"/>
<dbReference type="Proteomes" id="UP000000811">
    <property type="component" value="Chromosome"/>
</dbReference>
<sequence length="293" mass="32877">MTPTYHPYPGDNRPFLYAALQRREHLSLIRYRAEHAQDLAPLRAFLARIEAHATVIGARTRGDTLFILAASMPSDALRDEKHAYVRTISWEQAPQILETLERPPLPPYCPPVPTSCSSSRLIPDVPHNTRSHAQESSYTSRHALLTLLIEWRALMVEMDYSVRAHRVQRSSAPLHERHGTLPSDVLLFQTQGEVCALCAFQLQHVRAVGGQRHLIIHEAAGGGNIACERIFSLKEIDFATAKFTERIRRGLYQVAVHTAHADFTVNLIVPSLREQGGAYSLAESSAFHRRVSA</sequence>
<proteinExistence type="predicted"/>